<proteinExistence type="evidence at protein level"/>
<feature type="initiator methionine" description="Removed" evidence="5">
    <location>
        <position position="1"/>
    </location>
</feature>
<feature type="chain" id="PRO_0000439497" description="Dolichyl-diphosphooligosaccharide--protein glycosyltransferase subunit STT3B">
    <location>
        <begin position="2"/>
        <end position="826"/>
    </location>
</feature>
<feature type="topological domain" description="Cytoplasmic" evidence="12">
    <location>
        <begin position="2"/>
        <end position="41"/>
    </location>
</feature>
<feature type="transmembrane region" description="Helical" evidence="2">
    <location>
        <begin position="42"/>
        <end position="86"/>
    </location>
</feature>
<feature type="topological domain" description="Lumenal" evidence="12">
    <location>
        <begin position="87"/>
        <end position="173"/>
    </location>
</feature>
<feature type="transmembrane region" description="Helical" evidence="2">
    <location>
        <begin position="174"/>
        <end position="192"/>
    </location>
</feature>
<feature type="topological domain" description="Cytoplasmic" evidence="12">
    <location>
        <begin position="193"/>
        <end position="194"/>
    </location>
</feature>
<feature type="transmembrane region" description="Helical" evidence="2">
    <location>
        <begin position="195"/>
        <end position="212"/>
    </location>
</feature>
<feature type="topological domain" description="Lumenal" evidence="12">
    <location>
        <begin position="213"/>
        <end position="223"/>
    </location>
</feature>
<feature type="transmembrane region" description="Helical" evidence="2">
    <location>
        <begin position="224"/>
        <end position="243"/>
    </location>
</feature>
<feature type="topological domain" description="Cytoplasmic" evidence="12">
    <location>
        <begin position="244"/>
        <end position="245"/>
    </location>
</feature>
<feature type="transmembrane region" description="Helical" evidence="2">
    <location>
        <begin position="246"/>
        <end position="260"/>
    </location>
</feature>
<feature type="topological domain" description="Lumenal" evidence="12">
    <location>
        <begin position="261"/>
        <end position="265"/>
    </location>
</feature>
<feature type="transmembrane region" description="Helical" evidence="2">
    <location>
        <begin position="266"/>
        <end position="282"/>
    </location>
</feature>
<feature type="topological domain" description="Cytoplasmic" evidence="12">
    <location>
        <begin position="283"/>
        <end position="287"/>
    </location>
</feature>
<feature type="transmembrane region" description="Helical" evidence="2">
    <location>
        <begin position="288"/>
        <end position="313"/>
    </location>
</feature>
<feature type="topological domain" description="Lumenal" evidence="12">
    <location>
        <begin position="314"/>
        <end position="321"/>
    </location>
</feature>
<feature type="transmembrane region" description="Helical" evidence="2">
    <location>
        <begin position="322"/>
        <end position="341"/>
    </location>
</feature>
<feature type="topological domain" description="Cytoplasmic" evidence="12">
    <location>
        <begin position="342"/>
        <end position="350"/>
    </location>
</feature>
<feature type="transmembrane region" description="Helical" evidence="6">
    <location>
        <begin position="351"/>
        <end position="371"/>
    </location>
</feature>
<feature type="topological domain" description="Lumenal" evidence="12">
    <location>
        <begin position="372"/>
        <end position="410"/>
    </location>
</feature>
<feature type="transmembrane region" description="Helical" evidence="2">
    <location>
        <begin position="411"/>
        <end position="433"/>
    </location>
</feature>
<feature type="topological domain" description="Cytoplasmic" evidence="12">
    <location>
        <begin position="434"/>
        <end position="439"/>
    </location>
</feature>
<feature type="transmembrane region" description="Helical" evidence="2">
    <location>
        <begin position="440"/>
        <end position="456"/>
    </location>
</feature>
<feature type="topological domain" description="Lumenal" evidence="12">
    <location>
        <begin position="457"/>
        <end position="460"/>
    </location>
</feature>
<feature type="transmembrane region" description="Helical" evidence="2">
    <location>
        <begin position="461"/>
        <end position="482"/>
    </location>
</feature>
<feature type="topological domain" description="Cytoplasmic" evidence="12">
    <location>
        <begin position="483"/>
        <end position="526"/>
    </location>
</feature>
<feature type="transmembrane region" description="Helical" evidence="2">
    <location>
        <begin position="527"/>
        <end position="552"/>
    </location>
</feature>
<feature type="topological domain" description="Lumenal" evidence="12">
    <location>
        <begin position="553"/>
        <end position="826"/>
    </location>
</feature>
<feature type="region of interest" description="Disordered" evidence="8">
    <location>
        <begin position="1"/>
        <end position="60"/>
    </location>
</feature>
<feature type="region of interest" description="Disordered" evidence="8">
    <location>
        <begin position="490"/>
        <end position="512"/>
    </location>
</feature>
<feature type="region of interest" description="Interacts with target acceptor peptide in protein substrate" evidence="1">
    <location>
        <begin position="604"/>
        <end position="606"/>
    </location>
</feature>
<feature type="short sequence motif" description="DXD motif 1" evidence="4">
    <location>
        <begin position="101"/>
        <end position="103"/>
    </location>
</feature>
<feature type="short sequence motif" description="DXD motif 2" evidence="2">
    <location>
        <begin position="221"/>
        <end position="223"/>
    </location>
</feature>
<feature type="short sequence motif" description="SVSE motif" evidence="4">
    <location>
        <begin position="402"/>
        <end position="405"/>
    </location>
</feature>
<feature type="short sequence motif" description="WWDYG motif" evidence="2">
    <location>
        <begin position="604"/>
        <end position="608"/>
    </location>
</feature>
<feature type="short sequence motif" description="DK motif" evidence="2">
    <location>
        <begin position="671"/>
        <end position="678"/>
    </location>
</feature>
<feature type="binding site" evidence="1">
    <location>
        <position position="103"/>
    </location>
    <ligand>
        <name>Mn(2+)</name>
        <dbReference type="ChEBI" id="CHEBI:29035"/>
    </ligand>
</feature>
<feature type="binding site" evidence="1">
    <location>
        <position position="221"/>
    </location>
    <ligand>
        <name>Mn(2+)</name>
        <dbReference type="ChEBI" id="CHEBI:29035"/>
    </ligand>
</feature>
<feature type="binding site" evidence="1">
    <location>
        <position position="223"/>
    </location>
    <ligand>
        <name>Mn(2+)</name>
        <dbReference type="ChEBI" id="CHEBI:29035"/>
    </ligand>
</feature>
<feature type="binding site" evidence="1">
    <location>
        <position position="459"/>
    </location>
    <ligand>
        <name>dolichyl diphosphooligosaccharide</name>
        <dbReference type="ChEBI" id="CHEBI:57570"/>
    </ligand>
</feature>
<feature type="binding site" evidence="1">
    <location>
        <position position="609"/>
    </location>
    <ligand>
        <name>dolichyl diphosphooligosaccharide</name>
        <dbReference type="ChEBI" id="CHEBI:57570"/>
    </ligand>
</feature>
<feature type="site" description="Interacts with target acceptor peptide in protein substrate" evidence="1">
    <location>
        <position position="103"/>
    </location>
</feature>
<feature type="site" description="Important for catalytic activity" evidence="1">
    <location>
        <position position="214"/>
    </location>
</feature>
<feature type="site" description="Interacts with target acceptor peptide in protein substrate" evidence="1">
    <location>
        <position position="405"/>
    </location>
</feature>
<feature type="site" description="Interacts with target acceptor peptide in protein substrate" evidence="1">
    <location>
        <position position="674"/>
    </location>
</feature>
<feature type="modified residue" description="N-acetylalanine" evidence="5">
    <location>
        <position position="2"/>
    </location>
</feature>
<feature type="modified residue" description="Phosphoserine" evidence="3">
    <location>
        <position position="13"/>
    </location>
</feature>
<feature type="modified residue" description="Phosphoserine" evidence="5">
    <location>
        <position position="18"/>
    </location>
</feature>
<feature type="modified residue" description="Phosphoserine" evidence="5">
    <location>
        <position position="29"/>
    </location>
</feature>
<feature type="modified residue" description="Phosphoserine" evidence="5">
    <location>
        <position position="498"/>
    </location>
</feature>
<feature type="modified residue" description="Phosphoserine" evidence="5">
    <location>
        <position position="499"/>
    </location>
</feature>
<feature type="glycosylation site" description="N-linked (GlcNAc...) asparagine" evidence="7">
    <location>
        <position position="616"/>
    </location>
</feature>
<feature type="glycosylation site" description="N-linked (GlcNAc...) asparagine" evidence="7">
    <location>
        <position position="623"/>
    </location>
</feature>
<feature type="glycosylation site" description="N-linked (GlcNAc...) (high mannose) asparagine" evidence="2">
    <location>
        <position position="627"/>
    </location>
</feature>
<feature type="glycosylation site" description="N-linked (GlcNAc...) asparagine" evidence="7">
    <location>
        <position position="641"/>
    </location>
</feature>
<accession>E2RG47</accession>
<evidence type="ECO:0000250" key="1">
    <source>
        <dbReference type="UniProtKB" id="B9KDD4"/>
    </source>
</evidence>
<evidence type="ECO:0000250" key="2">
    <source>
        <dbReference type="UniProtKB" id="P39007"/>
    </source>
</evidence>
<evidence type="ECO:0000250" key="3">
    <source>
        <dbReference type="UniProtKB" id="Q3TDQ1"/>
    </source>
</evidence>
<evidence type="ECO:0000250" key="4">
    <source>
        <dbReference type="UniProtKB" id="Q5HTX9"/>
    </source>
</evidence>
<evidence type="ECO:0000250" key="5">
    <source>
        <dbReference type="UniProtKB" id="Q8TCJ2"/>
    </source>
</evidence>
<evidence type="ECO:0000255" key="6"/>
<evidence type="ECO:0000255" key="7">
    <source>
        <dbReference type="PROSITE-ProRule" id="PRU00498"/>
    </source>
</evidence>
<evidence type="ECO:0000256" key="8">
    <source>
        <dbReference type="SAM" id="MobiDB-lite"/>
    </source>
</evidence>
<evidence type="ECO:0000269" key="9">
    <source>
    </source>
</evidence>
<evidence type="ECO:0000269" key="10">
    <source>
    </source>
</evidence>
<evidence type="ECO:0000269" key="11">
    <source>
    </source>
</evidence>
<evidence type="ECO:0000305" key="12"/>
<evidence type="ECO:0000312" key="13">
    <source>
        <dbReference type="Proteomes" id="UP000002254"/>
    </source>
</evidence>
<dbReference type="EC" id="2.4.99.18"/>
<dbReference type="EMBL" id="AAEX03013534">
    <property type="status" value="NOT_ANNOTATED_CDS"/>
    <property type="molecule type" value="Genomic_DNA"/>
</dbReference>
<dbReference type="EMBL" id="AAEX03013535">
    <property type="status" value="NOT_ANNOTATED_CDS"/>
    <property type="molecule type" value="Genomic_DNA"/>
</dbReference>
<dbReference type="EMBL" id="AAEX03013536">
    <property type="status" value="NOT_ANNOTATED_CDS"/>
    <property type="molecule type" value="Genomic_DNA"/>
</dbReference>
<dbReference type="RefSeq" id="XP_038288006.1">
    <property type="nucleotide sequence ID" value="XM_038432078.1"/>
</dbReference>
<dbReference type="RefSeq" id="XP_038426546.1">
    <property type="nucleotide sequence ID" value="XM_038570618.1"/>
</dbReference>
<dbReference type="RefSeq" id="XP_542747.2">
    <property type="nucleotide sequence ID" value="XM_542747.7"/>
</dbReference>
<dbReference type="SMR" id="E2RG47"/>
<dbReference type="FunCoup" id="E2RG47">
    <property type="interactions" value="2867"/>
</dbReference>
<dbReference type="STRING" id="9615.ENSCAFP00000008096"/>
<dbReference type="GlyCosmos" id="E2RG47">
    <property type="glycosylation" value="4 sites, No reported glycans"/>
</dbReference>
<dbReference type="PaxDb" id="9612-ENSCAFP00000008096"/>
<dbReference type="Ensembl" id="ENSCAFT00000008731.6">
    <property type="protein sequence ID" value="ENSCAFP00000008096.4"/>
    <property type="gene ID" value="ENSCAFG00000005423.6"/>
</dbReference>
<dbReference type="Ensembl" id="ENSCAFT00030031681.1">
    <property type="protein sequence ID" value="ENSCAFP00030027632.1"/>
    <property type="gene ID" value="ENSCAFG00030017087.1"/>
</dbReference>
<dbReference type="Ensembl" id="ENSCAFT00040032989.1">
    <property type="protein sequence ID" value="ENSCAFP00040028704.1"/>
    <property type="gene ID" value="ENSCAFG00040017680.1"/>
</dbReference>
<dbReference type="Ensembl" id="ENSCAFT00845039537.1">
    <property type="protein sequence ID" value="ENSCAFP00845030985.1"/>
    <property type="gene ID" value="ENSCAFG00845022397.1"/>
</dbReference>
<dbReference type="GeneID" id="485628"/>
<dbReference type="KEGG" id="cfa:485628"/>
<dbReference type="CTD" id="201595"/>
<dbReference type="VEuPathDB" id="HostDB:ENSCAFG00845022397"/>
<dbReference type="VGNC" id="VGNC:52904">
    <property type="gene designation" value="STT3B"/>
</dbReference>
<dbReference type="eggNOG" id="KOG2292">
    <property type="taxonomic scope" value="Eukaryota"/>
</dbReference>
<dbReference type="GeneTree" id="ENSGT00940000155488"/>
<dbReference type="HOGENOM" id="CLU_009279_1_0_1"/>
<dbReference type="InParanoid" id="E2RG47"/>
<dbReference type="OMA" id="TKELWSP"/>
<dbReference type="OrthoDB" id="10261066at2759"/>
<dbReference type="TreeFam" id="TF300822"/>
<dbReference type="UniPathway" id="UPA00378"/>
<dbReference type="Proteomes" id="UP000002254">
    <property type="component" value="Chromosome 23"/>
</dbReference>
<dbReference type="Proteomes" id="UP000694429">
    <property type="component" value="Chromosome 23"/>
</dbReference>
<dbReference type="Proteomes" id="UP000694542">
    <property type="component" value="Chromosome 23"/>
</dbReference>
<dbReference type="Proteomes" id="UP000805418">
    <property type="component" value="Chromosome 23"/>
</dbReference>
<dbReference type="Bgee" id="ENSCAFG00000005423">
    <property type="expression patterns" value="Expressed in mucosa of urinary bladder and 45 other cell types or tissues"/>
</dbReference>
<dbReference type="GO" id="GO:0008250">
    <property type="term" value="C:oligosaccharyltransferase complex"/>
    <property type="evidence" value="ECO:0000314"/>
    <property type="project" value="UniProtKB"/>
</dbReference>
<dbReference type="GO" id="GO:0160227">
    <property type="term" value="C:oligosaccharyltransferase complex B"/>
    <property type="evidence" value="ECO:0007669"/>
    <property type="project" value="Ensembl"/>
</dbReference>
<dbReference type="GO" id="GO:0004579">
    <property type="term" value="F:dolichyl-diphosphooligosaccharide-protein glycotransferase activity"/>
    <property type="evidence" value="ECO:0000314"/>
    <property type="project" value="UniProtKB"/>
</dbReference>
<dbReference type="GO" id="GO:0046872">
    <property type="term" value="F:metal ion binding"/>
    <property type="evidence" value="ECO:0007669"/>
    <property type="project" value="UniProtKB-KW"/>
</dbReference>
<dbReference type="GO" id="GO:0043686">
    <property type="term" value="P:co-translational protein modification"/>
    <property type="evidence" value="ECO:0007669"/>
    <property type="project" value="Ensembl"/>
</dbReference>
<dbReference type="GO" id="GO:0036503">
    <property type="term" value="P:ERAD pathway"/>
    <property type="evidence" value="ECO:0007669"/>
    <property type="project" value="Ensembl"/>
</dbReference>
<dbReference type="GO" id="GO:0006516">
    <property type="term" value="P:glycoprotein catabolic process"/>
    <property type="evidence" value="ECO:0007669"/>
    <property type="project" value="Ensembl"/>
</dbReference>
<dbReference type="GO" id="GO:0043687">
    <property type="term" value="P:post-translational protein modification"/>
    <property type="evidence" value="ECO:0000250"/>
    <property type="project" value="UniProtKB"/>
</dbReference>
<dbReference type="GO" id="GO:0018279">
    <property type="term" value="P:protein N-linked glycosylation via asparagine"/>
    <property type="evidence" value="ECO:0000314"/>
    <property type="project" value="UniProtKB"/>
</dbReference>
<dbReference type="GO" id="GO:0006986">
    <property type="term" value="P:response to unfolded protein"/>
    <property type="evidence" value="ECO:0007669"/>
    <property type="project" value="Ensembl"/>
</dbReference>
<dbReference type="FunFam" id="3.40.50.12610:FF:000001">
    <property type="entry name" value="Dolichyl-diphosphooligosaccharide--protein glycosyltransferase subunit STT3B"/>
    <property type="match status" value="1"/>
</dbReference>
<dbReference type="Gene3D" id="3.40.50.12610">
    <property type="match status" value="1"/>
</dbReference>
<dbReference type="InterPro" id="IPR003674">
    <property type="entry name" value="Oligo_trans_STT3"/>
</dbReference>
<dbReference type="InterPro" id="IPR048999">
    <property type="entry name" value="STT3-PglB_core"/>
</dbReference>
<dbReference type="InterPro" id="IPR048307">
    <property type="entry name" value="STT3_N"/>
</dbReference>
<dbReference type="PANTHER" id="PTHR13872">
    <property type="entry name" value="DOLICHYL-DIPHOSPHOOLIGOSACCHARIDE--PROTEIN GLYCOSYLTRANSFERASE SUBUNIT"/>
    <property type="match status" value="1"/>
</dbReference>
<dbReference type="PANTHER" id="PTHR13872:SF1">
    <property type="entry name" value="DOLICHYL-DIPHOSPHOOLIGOSACCHARIDE--PROTEIN GLYCOSYLTRANSFERASE SUBUNIT STT3B"/>
    <property type="match status" value="1"/>
</dbReference>
<dbReference type="Pfam" id="PF02516">
    <property type="entry name" value="STT3"/>
    <property type="match status" value="1"/>
</dbReference>
<dbReference type="Pfam" id="PF21436">
    <property type="entry name" value="STT3-PglB_core"/>
    <property type="match status" value="1"/>
</dbReference>
<comment type="function">
    <text evidence="2 5 9">Catalytic subunit of the oligosaccharyl transferase (OST) complex that catalyzes the initial transfer of a defined glycan (Glc(3)Man(9)GlcNAc(2) in eukaryotes) from the lipid carrier dolichol-pyrophosphate to an asparagine residue within an Asn-X-Ser/Thr consensus motif in nascent polypeptide chains, the first step in protein N-glycosylation (By similarity). N-glycosylation occurs cotranslationally and the complex associates with the Sec61 complex at the channel-forming translocon complex that mediates protein translocation across the endoplasmic reticulum (ER). All subunits are required for a maximal enzyme activity. This subunit contains the active site and the acceptor peptide and donor lipid-linked oligosaccharide (LLO) binding pockets (By similarity). STT3B is present in a small subset of OST complexes and mediates both cotranslational and post-translational N-glycosylation of target proteins: STT3B-containing complexes are required for efficient post-translational glycosylation and while they are less competent than STT3A-containing complexes for cotranslational glycosylation, they have the ability to mediate glycosylation of some nascent sites that are not accessible for STT3A. STT3B-containing complexes also act post-translationally and mediate modification of skipped glycosylation sites in unfolded proteins. Plays a role in ER-associated degradation (ERAD) pathway that mediates ubiquitin-dependent degradation of misfolded endoplasmic reticulum proteins by mediating N-glycosylation of unfolded proteins, which are then recognized by the ERAD pathway and targeted for degradation (PubMed:12887896).</text>
</comment>
<comment type="catalytic activity">
    <reaction evidence="2">
        <text>a di-trans,poly-cis-dolichyl diphosphooligosaccharide + L-asparaginyl-[protein] = N(4)-(oligosaccharide-(1-&gt;4)-N-acetyl-beta-D-glucosaminyl-(1-&gt;4)-N-acetyl-beta-D-glucosaminyl)-L-asparaginyl-[protein] + a di-trans,poly-cis-dolichyl diphosphate + H(+)</text>
        <dbReference type="Rhea" id="RHEA:22980"/>
        <dbReference type="Rhea" id="RHEA-COMP:12804"/>
        <dbReference type="Rhea" id="RHEA-COMP:12805"/>
        <dbReference type="Rhea" id="RHEA-COMP:19506"/>
        <dbReference type="Rhea" id="RHEA-COMP:19509"/>
        <dbReference type="ChEBI" id="CHEBI:15378"/>
        <dbReference type="ChEBI" id="CHEBI:50347"/>
        <dbReference type="ChEBI" id="CHEBI:57497"/>
        <dbReference type="ChEBI" id="CHEBI:57570"/>
        <dbReference type="ChEBI" id="CHEBI:132529"/>
        <dbReference type="EC" id="2.4.99.18"/>
    </reaction>
</comment>
<comment type="cofactor">
    <cofactor evidence="5">
        <name>Mg(2+)</name>
        <dbReference type="ChEBI" id="CHEBI:18420"/>
    </cofactor>
    <cofactor evidence="1">
        <name>Mn(2+)</name>
        <dbReference type="ChEBI" id="CHEBI:29035"/>
    </cofactor>
</comment>
<comment type="pathway">
    <text evidence="5">Protein modification; protein glycosylation.</text>
</comment>
<comment type="subunit">
    <text evidence="9 10 11">Component of the oligosaccharyltransferase (OST) complex (PubMed:12887896, PubMed:15835887, PubMed:25135935). There are 2 OST complexes, OST-A and OST-B, which contain STT3A or STT3B as catalytic subunit, respectively (PubMed:12887896, PubMed:15835887, PubMed:25135935). OST-A and OST-B contain common core subunits RPN1, RPN2, OST48, OST4, DAD1 and TMEM258, and OST-B contains either MAGT1 or TUSC3 as specific accessory subunit (PubMed:12887896, PubMed:15835887, PubMed:25135935).</text>
</comment>
<comment type="subcellular location">
    <subcellularLocation>
        <location evidence="9">Endoplasmic reticulum</location>
    </subcellularLocation>
    <subcellularLocation>
        <location>Endoplasmic reticulum membrane</location>
        <topology evidence="2">Multi-pass membrane protein</topology>
    </subcellularLocation>
</comment>
<comment type="domain">
    <text evidence="2">Despite low primary sequence conservation between eukaryotic catalytic subunits and bacterial and archaeal single subunit OSTs (ssOST), structural comparison revealed several common motifs at spatially equivalent positions, like the DXD motif 1 on the external loop 1 and the DXD motif 2 on the external loop 2 involved in binding of the metal ion cofactor and the carboxamide group of the acceptor asparagine, the conserved Glu residue of the TIXE/SVSE motif on the external loop 5 involved in catalysis, as well as the WWDYG and the DK/MI motifs in the globular domain that define the binding pocket for the +2 Ser/Thr of the acceptor sequon. In bacterial ssOSTs, an Arg residue was found to interact with a negatively charged side chain at the -2 position of the sequon. This Arg is conserved in bacterial enzymes and correlates with an extended sequon requirement (Asp-X-Asn-X-Ser/Thr) for bacterial N-glycosylation.</text>
</comment>
<comment type="similarity">
    <text evidence="12">Belongs to the STT3 family.</text>
</comment>
<organism>
    <name type="scientific">Canis lupus familiaris</name>
    <name type="common">Dog</name>
    <name type="synonym">Canis familiaris</name>
    <dbReference type="NCBI Taxonomy" id="9615"/>
    <lineage>
        <taxon>Eukaryota</taxon>
        <taxon>Metazoa</taxon>
        <taxon>Chordata</taxon>
        <taxon>Craniata</taxon>
        <taxon>Vertebrata</taxon>
        <taxon>Euteleostomi</taxon>
        <taxon>Mammalia</taxon>
        <taxon>Eutheria</taxon>
        <taxon>Laurasiatheria</taxon>
        <taxon>Carnivora</taxon>
        <taxon>Caniformia</taxon>
        <taxon>Canidae</taxon>
        <taxon>Canis</taxon>
    </lineage>
</organism>
<reference key="1">
    <citation type="journal article" date="2005" name="Nature">
        <title>Genome sequence, comparative analysis and haplotype structure of the domestic dog.</title>
        <authorList>
            <person name="Lindblad-Toh K."/>
            <person name="Wade C.M."/>
            <person name="Mikkelsen T.S."/>
            <person name="Karlsson E.K."/>
            <person name="Jaffe D.B."/>
            <person name="Kamal M."/>
            <person name="Clamp M."/>
            <person name="Chang J.L."/>
            <person name="Kulbokas E.J. III"/>
            <person name="Zody M.C."/>
            <person name="Mauceli E."/>
            <person name="Xie X."/>
            <person name="Breen M."/>
            <person name="Wayne R.K."/>
            <person name="Ostrander E.A."/>
            <person name="Ponting C.P."/>
            <person name="Galibert F."/>
            <person name="Smith D.R."/>
            <person name="deJong P.J."/>
            <person name="Kirkness E.F."/>
            <person name="Alvarez P."/>
            <person name="Biagi T."/>
            <person name="Brockman W."/>
            <person name="Butler J."/>
            <person name="Chin C.-W."/>
            <person name="Cook A."/>
            <person name="Cuff J."/>
            <person name="Daly M.J."/>
            <person name="DeCaprio D."/>
            <person name="Gnerre S."/>
            <person name="Grabherr M."/>
            <person name="Kellis M."/>
            <person name="Kleber M."/>
            <person name="Bardeleben C."/>
            <person name="Goodstadt L."/>
            <person name="Heger A."/>
            <person name="Hitte C."/>
            <person name="Kim L."/>
            <person name="Koepfli K.-P."/>
            <person name="Parker H.G."/>
            <person name="Pollinger J.P."/>
            <person name="Searle S.M.J."/>
            <person name="Sutter N.B."/>
            <person name="Thomas R."/>
            <person name="Webber C."/>
            <person name="Baldwin J."/>
            <person name="Abebe A."/>
            <person name="Abouelleil A."/>
            <person name="Aftuck L."/>
            <person name="Ait-Zahra M."/>
            <person name="Aldredge T."/>
            <person name="Allen N."/>
            <person name="An P."/>
            <person name="Anderson S."/>
            <person name="Antoine C."/>
            <person name="Arachchi H."/>
            <person name="Aslam A."/>
            <person name="Ayotte L."/>
            <person name="Bachantsang P."/>
            <person name="Barry A."/>
            <person name="Bayul T."/>
            <person name="Benamara M."/>
            <person name="Berlin A."/>
            <person name="Bessette D."/>
            <person name="Blitshteyn B."/>
            <person name="Bloom T."/>
            <person name="Blye J."/>
            <person name="Boguslavskiy L."/>
            <person name="Bonnet C."/>
            <person name="Boukhgalter B."/>
            <person name="Brown A."/>
            <person name="Cahill P."/>
            <person name="Calixte N."/>
            <person name="Camarata J."/>
            <person name="Cheshatsang Y."/>
            <person name="Chu J."/>
            <person name="Citroen M."/>
            <person name="Collymore A."/>
            <person name="Cooke P."/>
            <person name="Dawoe T."/>
            <person name="Daza R."/>
            <person name="Decktor K."/>
            <person name="DeGray S."/>
            <person name="Dhargay N."/>
            <person name="Dooley K."/>
            <person name="Dooley K."/>
            <person name="Dorje P."/>
            <person name="Dorjee K."/>
            <person name="Dorris L."/>
            <person name="Duffey N."/>
            <person name="Dupes A."/>
            <person name="Egbiremolen O."/>
            <person name="Elong R."/>
            <person name="Falk J."/>
            <person name="Farina A."/>
            <person name="Faro S."/>
            <person name="Ferguson D."/>
            <person name="Ferreira P."/>
            <person name="Fisher S."/>
            <person name="FitzGerald M."/>
            <person name="Foley K."/>
            <person name="Foley C."/>
            <person name="Franke A."/>
            <person name="Friedrich D."/>
            <person name="Gage D."/>
            <person name="Garber M."/>
            <person name="Gearin G."/>
            <person name="Giannoukos G."/>
            <person name="Goode T."/>
            <person name="Goyette A."/>
            <person name="Graham J."/>
            <person name="Grandbois E."/>
            <person name="Gyaltsen K."/>
            <person name="Hafez N."/>
            <person name="Hagopian D."/>
            <person name="Hagos B."/>
            <person name="Hall J."/>
            <person name="Healy C."/>
            <person name="Hegarty R."/>
            <person name="Honan T."/>
            <person name="Horn A."/>
            <person name="Houde N."/>
            <person name="Hughes L."/>
            <person name="Hunnicutt L."/>
            <person name="Husby M."/>
            <person name="Jester B."/>
            <person name="Jones C."/>
            <person name="Kamat A."/>
            <person name="Kanga B."/>
            <person name="Kells C."/>
            <person name="Khazanovich D."/>
            <person name="Kieu A.C."/>
            <person name="Kisner P."/>
            <person name="Kumar M."/>
            <person name="Lance K."/>
            <person name="Landers T."/>
            <person name="Lara M."/>
            <person name="Lee W."/>
            <person name="Leger J.-P."/>
            <person name="Lennon N."/>
            <person name="Leuper L."/>
            <person name="LeVine S."/>
            <person name="Liu J."/>
            <person name="Liu X."/>
            <person name="Lokyitsang Y."/>
            <person name="Lokyitsang T."/>
            <person name="Lui A."/>
            <person name="Macdonald J."/>
            <person name="Major J."/>
            <person name="Marabella R."/>
            <person name="Maru K."/>
            <person name="Matthews C."/>
            <person name="McDonough S."/>
            <person name="Mehta T."/>
            <person name="Meldrim J."/>
            <person name="Melnikov A."/>
            <person name="Meneus L."/>
            <person name="Mihalev A."/>
            <person name="Mihova T."/>
            <person name="Miller K."/>
            <person name="Mittelman R."/>
            <person name="Mlenga V."/>
            <person name="Mulrain L."/>
            <person name="Munson G."/>
            <person name="Navidi A."/>
            <person name="Naylor J."/>
            <person name="Nguyen T."/>
            <person name="Nguyen N."/>
            <person name="Nguyen C."/>
            <person name="Nguyen T."/>
            <person name="Nicol R."/>
            <person name="Norbu N."/>
            <person name="Norbu C."/>
            <person name="Novod N."/>
            <person name="Nyima T."/>
            <person name="Olandt P."/>
            <person name="O'Neill B."/>
            <person name="O'Neill K."/>
            <person name="Osman S."/>
            <person name="Oyono L."/>
            <person name="Patti C."/>
            <person name="Perrin D."/>
            <person name="Phunkhang P."/>
            <person name="Pierre F."/>
            <person name="Priest M."/>
            <person name="Rachupka A."/>
            <person name="Raghuraman S."/>
            <person name="Rameau R."/>
            <person name="Ray V."/>
            <person name="Raymond C."/>
            <person name="Rege F."/>
            <person name="Rise C."/>
            <person name="Rogers J."/>
            <person name="Rogov P."/>
            <person name="Sahalie J."/>
            <person name="Settipalli S."/>
            <person name="Sharpe T."/>
            <person name="Shea T."/>
            <person name="Sheehan M."/>
            <person name="Sherpa N."/>
            <person name="Shi J."/>
            <person name="Shih D."/>
            <person name="Sloan J."/>
            <person name="Smith C."/>
            <person name="Sparrow T."/>
            <person name="Stalker J."/>
            <person name="Stange-Thomann N."/>
            <person name="Stavropoulos S."/>
            <person name="Stone C."/>
            <person name="Stone S."/>
            <person name="Sykes S."/>
            <person name="Tchuinga P."/>
            <person name="Tenzing P."/>
            <person name="Tesfaye S."/>
            <person name="Thoulutsang D."/>
            <person name="Thoulutsang Y."/>
            <person name="Topham K."/>
            <person name="Topping I."/>
            <person name="Tsamla T."/>
            <person name="Vassiliev H."/>
            <person name="Venkataraman V."/>
            <person name="Vo A."/>
            <person name="Wangchuk T."/>
            <person name="Wangdi T."/>
            <person name="Weiand M."/>
            <person name="Wilkinson J."/>
            <person name="Wilson A."/>
            <person name="Yadav S."/>
            <person name="Yang S."/>
            <person name="Yang X."/>
            <person name="Young G."/>
            <person name="Yu Q."/>
            <person name="Zainoun J."/>
            <person name="Zembek L."/>
            <person name="Zimmer A."/>
            <person name="Lander E.S."/>
        </authorList>
    </citation>
    <scope>NUCLEOTIDE SEQUENCE [LARGE SCALE GENOMIC DNA]</scope>
    <source>
        <strain evidence="13">Boxer</strain>
    </source>
</reference>
<reference key="2">
    <citation type="journal article" date="2003" name="Mol. Cell">
        <title>Oligosaccharyltransferase isoforms that contain different catalytic STT3 subunits have distinct enzymatic properties.</title>
        <authorList>
            <person name="Kelleher D.J."/>
            <person name="Karaoglu D."/>
            <person name="Mandon E.C."/>
            <person name="Gilmore R."/>
        </authorList>
    </citation>
    <scope>IDENTIFICATION IN THE OLIGOSACCHARYLTRANSFERASE (OST) COMPLEX</scope>
    <scope>FUNCTION OF THE OLIGOSACCHARYLTRANSFERASE (OST) COMPLEX</scope>
    <scope>SUBCELLULAR LOCATION</scope>
</reference>
<reference key="3">
    <citation type="journal article" date="2005" name="Biochemistry">
        <title>Proteomic analysis of mammalian oligosaccharyltransferase reveals multiple subcomplexes that contain Sec61, TRAP, and two potential new subunits.</title>
        <authorList>
            <person name="Shibatani T."/>
            <person name="David L.L."/>
            <person name="McCormack A.L."/>
            <person name="Frueh K."/>
            <person name="Skach W.R."/>
        </authorList>
    </citation>
    <scope>IDENTIFICATION IN THE OLIGOSACCHARYLTRANSFERASE (OST) COMPLEX</scope>
</reference>
<reference key="4">
    <citation type="journal article" date="2014" name="J. Cell Biol.">
        <title>Oxidoreductase activity is necessary for N-glycosylation of cysteine-proximal acceptor sites in glycoproteins.</title>
        <authorList>
            <person name="Cherepanova N.A."/>
            <person name="Shrimal S."/>
            <person name="Gilmore R."/>
        </authorList>
    </citation>
    <scope>IDENTIFICATION IN THE OLIGOSACCHARYLTRANSFERASE (OST) COMPLEX</scope>
</reference>
<gene>
    <name evidence="5" type="primary">STT3B</name>
</gene>
<keyword id="KW-0007">Acetylation</keyword>
<keyword id="KW-0256">Endoplasmic reticulum</keyword>
<keyword id="KW-0325">Glycoprotein</keyword>
<keyword id="KW-0328">Glycosyltransferase</keyword>
<keyword id="KW-0460">Magnesium</keyword>
<keyword id="KW-0464">Manganese</keyword>
<keyword id="KW-0472">Membrane</keyword>
<keyword id="KW-0479">Metal-binding</keyword>
<keyword id="KW-0597">Phosphoprotein</keyword>
<keyword id="KW-1185">Reference proteome</keyword>
<keyword id="KW-0808">Transferase</keyword>
<keyword id="KW-0812">Transmembrane</keyword>
<keyword id="KW-1133">Transmembrane helix</keyword>
<protein>
    <recommendedName>
        <fullName evidence="5">Dolichyl-diphosphooligosaccharide--protein glycosyltransferase subunit STT3B</fullName>
        <shortName>Oligosaccharyl transferase subunit STT3B</shortName>
        <shortName>STT3-B</shortName>
        <ecNumber>2.4.99.18</ecNumber>
    </recommendedName>
</protein>
<sequence length="826" mass="93671">MAEPSAPESKHKSSLNSSPWSGLMALGNSRHGHHGPGAQCAHKAAGGVAPPKPAPAGLSGGLSQPAGWQSLLSFTILFLAWLAGFSSRLFAVIRFESIIHEFDPWFNYRSTHHLASHGFYEFLNWFDERAWYPLGRIVGGTVYPGLMITAGLIHWILNTLNITVHIRDVCVFLAPTFSGLTSISTFLLTRELWNQGAGLLAACFIAIVPGYISRSVAGSFDNEGIAIFALQFTYYLWVKSVKTGSVFWTMCCCLSYFYMVSAWGGYVFIINLIPLHVFVLLLMQRYSKRVYIAYSTFYIVGLILSMQIPFVGFQPIRTSEHMAAAGVFALLQAYAFLQYLRDRLTKQEFQTLFFLGVSLAAGAVFLSVIYLTYTGYIAPWSGRFYSLWDTGYAKIHIPIIASVSEHQPTTWVSFFFDLHILVCTFPAGLWFCIKNINDERVFVALYAISAVYFAGVMVRLMLTLTPVVCMLSAIAFSNVFEHYLGDDMKRENPPVEDSSDEDDKRNPGNLYDKAGKVRKHVTEQEKTEEGLGPNIKSIVTMLMLMLLMMFAVHCTWVTSNAYSSPSVVLASYNHDGTRNILDDFREAYFWLRQNTDEHARVMSWWDYGYQIAGMANRTTLVDNNTWNNSHIALVGKAMSSNESAAYKIMRSLDVDYVLVIFGGVIGYSGDDINKFLWMVRIAEGEHPKDIRESDYFTPQGEFRVDKAGSPTLLNCLMYKMSYYRFGEMQLDFRTPPGFDRTRNAEIGNKDIKFKHLEEAFTSEHWLVRIYKVKAPDNRETLDHKPRVTNIFPKQKYLSKKTTKRKRGYIKNKLVFKKGKKISKKTV</sequence>
<name>STT3B_CANLF</name>